<gene>
    <name evidence="1" type="primary">rplC</name>
    <name type="ordered locus">BF4003</name>
</gene>
<evidence type="ECO:0000255" key="1">
    <source>
        <dbReference type="HAMAP-Rule" id="MF_01325"/>
    </source>
</evidence>
<evidence type="ECO:0000305" key="2"/>
<comment type="function">
    <text evidence="1">One of the primary rRNA binding proteins, it binds directly near the 3'-end of the 23S rRNA, where it nucleates assembly of the 50S subunit.</text>
</comment>
<comment type="subunit">
    <text evidence="1">Part of the 50S ribosomal subunit. Forms a cluster with proteins L14 and L19.</text>
</comment>
<comment type="similarity">
    <text evidence="1">Belongs to the universal ribosomal protein uL3 family.</text>
</comment>
<keyword id="KW-0687">Ribonucleoprotein</keyword>
<keyword id="KW-0689">Ribosomal protein</keyword>
<keyword id="KW-0694">RNA-binding</keyword>
<keyword id="KW-0699">rRNA-binding</keyword>
<organism>
    <name type="scientific">Bacteroides fragilis (strain ATCC 25285 / DSM 2151 / CCUG 4856 / JCM 11019 / LMG 10263 / NCTC 9343 / Onslow / VPI 2553 / EN-2)</name>
    <dbReference type="NCBI Taxonomy" id="272559"/>
    <lineage>
        <taxon>Bacteria</taxon>
        <taxon>Pseudomonadati</taxon>
        <taxon>Bacteroidota</taxon>
        <taxon>Bacteroidia</taxon>
        <taxon>Bacteroidales</taxon>
        <taxon>Bacteroidaceae</taxon>
        <taxon>Bacteroides</taxon>
    </lineage>
</organism>
<protein>
    <recommendedName>
        <fullName evidence="1">Large ribosomal subunit protein uL3</fullName>
    </recommendedName>
    <alternativeName>
        <fullName evidence="2">50S ribosomal protein L3</fullName>
    </alternativeName>
</protein>
<feature type="chain" id="PRO_0000241316" description="Large ribosomal subunit protein uL3">
    <location>
        <begin position="1"/>
        <end position="205"/>
    </location>
</feature>
<dbReference type="EMBL" id="CR626927">
    <property type="protein sequence ID" value="CAH09679.1"/>
    <property type="molecule type" value="Genomic_DNA"/>
</dbReference>
<dbReference type="RefSeq" id="WP_005782189.1">
    <property type="nucleotide sequence ID" value="NZ_UFTH01000001.1"/>
</dbReference>
<dbReference type="SMR" id="Q5L8A9"/>
<dbReference type="PaxDb" id="272559-BF9343_3898"/>
<dbReference type="GeneID" id="93105324"/>
<dbReference type="KEGG" id="bfs:BF9343_3898"/>
<dbReference type="eggNOG" id="COG0087">
    <property type="taxonomic scope" value="Bacteria"/>
</dbReference>
<dbReference type="HOGENOM" id="CLU_044142_4_1_10"/>
<dbReference type="Proteomes" id="UP000006731">
    <property type="component" value="Chromosome"/>
</dbReference>
<dbReference type="GO" id="GO:0022625">
    <property type="term" value="C:cytosolic large ribosomal subunit"/>
    <property type="evidence" value="ECO:0007669"/>
    <property type="project" value="TreeGrafter"/>
</dbReference>
<dbReference type="GO" id="GO:0019843">
    <property type="term" value="F:rRNA binding"/>
    <property type="evidence" value="ECO:0007669"/>
    <property type="project" value="UniProtKB-UniRule"/>
</dbReference>
<dbReference type="GO" id="GO:0003735">
    <property type="term" value="F:structural constituent of ribosome"/>
    <property type="evidence" value="ECO:0007669"/>
    <property type="project" value="InterPro"/>
</dbReference>
<dbReference type="GO" id="GO:0006412">
    <property type="term" value="P:translation"/>
    <property type="evidence" value="ECO:0007669"/>
    <property type="project" value="UniProtKB-UniRule"/>
</dbReference>
<dbReference type="FunFam" id="2.40.30.10:FF:000047">
    <property type="entry name" value="50S ribosomal protein L3"/>
    <property type="match status" value="1"/>
</dbReference>
<dbReference type="FunFam" id="3.30.160.810:FF:000001">
    <property type="entry name" value="50S ribosomal protein L3"/>
    <property type="match status" value="1"/>
</dbReference>
<dbReference type="Gene3D" id="3.30.160.810">
    <property type="match status" value="1"/>
</dbReference>
<dbReference type="Gene3D" id="2.40.30.10">
    <property type="entry name" value="Translation factors"/>
    <property type="match status" value="1"/>
</dbReference>
<dbReference type="HAMAP" id="MF_01325_B">
    <property type="entry name" value="Ribosomal_uL3_B"/>
    <property type="match status" value="1"/>
</dbReference>
<dbReference type="InterPro" id="IPR000597">
    <property type="entry name" value="Ribosomal_uL3"/>
</dbReference>
<dbReference type="InterPro" id="IPR019927">
    <property type="entry name" value="Ribosomal_uL3_bac/org-type"/>
</dbReference>
<dbReference type="InterPro" id="IPR019926">
    <property type="entry name" value="Ribosomal_uL3_CS"/>
</dbReference>
<dbReference type="InterPro" id="IPR009000">
    <property type="entry name" value="Transl_B-barrel_sf"/>
</dbReference>
<dbReference type="NCBIfam" id="TIGR03625">
    <property type="entry name" value="L3_bact"/>
    <property type="match status" value="1"/>
</dbReference>
<dbReference type="PANTHER" id="PTHR11229">
    <property type="entry name" value="50S RIBOSOMAL PROTEIN L3"/>
    <property type="match status" value="1"/>
</dbReference>
<dbReference type="PANTHER" id="PTHR11229:SF16">
    <property type="entry name" value="LARGE RIBOSOMAL SUBUNIT PROTEIN UL3C"/>
    <property type="match status" value="1"/>
</dbReference>
<dbReference type="Pfam" id="PF00297">
    <property type="entry name" value="Ribosomal_L3"/>
    <property type="match status" value="1"/>
</dbReference>
<dbReference type="SUPFAM" id="SSF50447">
    <property type="entry name" value="Translation proteins"/>
    <property type="match status" value="1"/>
</dbReference>
<dbReference type="PROSITE" id="PS00474">
    <property type="entry name" value="RIBOSOMAL_L3"/>
    <property type="match status" value="1"/>
</dbReference>
<proteinExistence type="inferred from homology"/>
<accession>Q5L8A9</accession>
<sequence length="205" mass="21862">MPGLLGKKIGMTSVFSADGKNVPCTVIEAGPCVVTQVKTVEKDGYAAVQLGFQDKKEKHTTKPLMGHFKKAGVTPKRHLAEFKEFENELNLGDTVTVELFDGADYVDVVGTSKGKGFQGVVKRHGFGGVGQSTHGQHNRARKPGSIGACSYPAKVFKGMRMGGQMGGDRVTVQNLQVLKVIAEHNLLLIKGSVPGCKGSIVLIEK</sequence>
<name>RL3_BACFN</name>
<reference key="1">
    <citation type="journal article" date="2005" name="Science">
        <title>Extensive DNA inversions in the B. fragilis genome control variable gene expression.</title>
        <authorList>
            <person name="Cerdeno-Tarraga A.-M."/>
            <person name="Patrick S."/>
            <person name="Crossman L.C."/>
            <person name="Blakely G."/>
            <person name="Abratt V."/>
            <person name="Lennard N."/>
            <person name="Poxton I."/>
            <person name="Duerden B."/>
            <person name="Harris B."/>
            <person name="Quail M.A."/>
            <person name="Barron A."/>
            <person name="Clark L."/>
            <person name="Corton C."/>
            <person name="Doggett J."/>
            <person name="Holden M.T.G."/>
            <person name="Larke N."/>
            <person name="Line A."/>
            <person name="Lord A."/>
            <person name="Norbertczak H."/>
            <person name="Ormond D."/>
            <person name="Price C."/>
            <person name="Rabbinowitsch E."/>
            <person name="Woodward J."/>
            <person name="Barrell B.G."/>
            <person name="Parkhill J."/>
        </authorList>
    </citation>
    <scope>NUCLEOTIDE SEQUENCE [LARGE SCALE GENOMIC DNA]</scope>
    <source>
        <strain>ATCC 25285 / DSM 2151 / CCUG 4856 / JCM 11019 / LMG 10263 / NCTC 9343 / Onslow / VPI 2553 / EN-2</strain>
    </source>
</reference>